<accession>O94320</accession>
<dbReference type="EC" id="2.6.1.1"/>
<dbReference type="EMBL" id="CU329671">
    <property type="protein sequence ID" value="CAA22173.1"/>
    <property type="molecule type" value="Genomic_DNA"/>
</dbReference>
<dbReference type="PIR" id="T40653">
    <property type="entry name" value="T40653"/>
</dbReference>
<dbReference type="SMR" id="O94320"/>
<dbReference type="BioGRID" id="277700">
    <property type="interactions" value="48"/>
</dbReference>
<dbReference type="FunCoup" id="O94320">
    <property type="interactions" value="605"/>
</dbReference>
<dbReference type="STRING" id="284812.O94320"/>
<dbReference type="PaxDb" id="4896-SPBC725.01.1"/>
<dbReference type="EnsemblFungi" id="SPBC725.01.1">
    <property type="protein sequence ID" value="SPBC725.01.1:pep"/>
    <property type="gene ID" value="SPBC725.01"/>
</dbReference>
<dbReference type="KEGG" id="spo:2541186"/>
<dbReference type="PomBase" id="SPBC725.01"/>
<dbReference type="VEuPathDB" id="FungiDB:SPBC725.01"/>
<dbReference type="eggNOG" id="KOG1411">
    <property type="taxonomic scope" value="Eukaryota"/>
</dbReference>
<dbReference type="HOGENOM" id="CLU_032440_1_0_1"/>
<dbReference type="InParanoid" id="O94320"/>
<dbReference type="OMA" id="VGACTIV"/>
<dbReference type="PhylomeDB" id="O94320"/>
<dbReference type="Reactome" id="R-SPO-389661">
    <property type="pathway name" value="Glyoxylate metabolism and glycine degradation"/>
</dbReference>
<dbReference type="Reactome" id="R-SPO-8963693">
    <property type="pathway name" value="Aspartate and asparagine metabolism"/>
</dbReference>
<dbReference type="Reactome" id="R-SPO-8964539">
    <property type="pathway name" value="Glutamate and glutamine metabolism"/>
</dbReference>
<dbReference type="Reactome" id="R-SPO-9856872">
    <property type="pathway name" value="Malate-aspartate shuttle"/>
</dbReference>
<dbReference type="PRO" id="PR:O94320"/>
<dbReference type="Proteomes" id="UP000002485">
    <property type="component" value="Chromosome II"/>
</dbReference>
<dbReference type="GO" id="GO:0005759">
    <property type="term" value="C:mitochondrial matrix"/>
    <property type="evidence" value="ECO:0000250"/>
    <property type="project" value="PomBase"/>
</dbReference>
<dbReference type="GO" id="GO:0005739">
    <property type="term" value="C:mitochondrion"/>
    <property type="evidence" value="ECO:0007005"/>
    <property type="project" value="PomBase"/>
</dbReference>
<dbReference type="GO" id="GO:0004069">
    <property type="term" value="F:L-aspartate:2-oxoglutarate aminotransferase activity"/>
    <property type="evidence" value="ECO:0000250"/>
    <property type="project" value="UniProtKB"/>
</dbReference>
<dbReference type="GO" id="GO:0030170">
    <property type="term" value="F:pyridoxal phosphate binding"/>
    <property type="evidence" value="ECO:0007669"/>
    <property type="project" value="InterPro"/>
</dbReference>
<dbReference type="GO" id="GO:0006103">
    <property type="term" value="P:2-oxoglutarate metabolic process"/>
    <property type="evidence" value="ECO:0000250"/>
    <property type="project" value="UniProtKB"/>
</dbReference>
<dbReference type="GO" id="GO:0019266">
    <property type="term" value="P:asparagine biosynthetic process from oxaloacetate"/>
    <property type="evidence" value="ECO:0000250"/>
    <property type="project" value="PomBase"/>
</dbReference>
<dbReference type="GO" id="GO:0006532">
    <property type="term" value="P:aspartate biosynthetic process"/>
    <property type="evidence" value="ECO:0000250"/>
    <property type="project" value="PomBase"/>
</dbReference>
<dbReference type="GO" id="GO:0006533">
    <property type="term" value="P:aspartate catabolic process"/>
    <property type="evidence" value="ECO:0000318"/>
    <property type="project" value="GO_Central"/>
</dbReference>
<dbReference type="GO" id="GO:0006531">
    <property type="term" value="P:aspartate metabolic process"/>
    <property type="evidence" value="ECO:0000250"/>
    <property type="project" value="UniProtKB"/>
</dbReference>
<dbReference type="GO" id="GO:0006536">
    <property type="term" value="P:glutamate metabolic process"/>
    <property type="evidence" value="ECO:0000250"/>
    <property type="project" value="UniProtKB"/>
</dbReference>
<dbReference type="CDD" id="cd00609">
    <property type="entry name" value="AAT_like"/>
    <property type="match status" value="1"/>
</dbReference>
<dbReference type="FunFam" id="3.40.640.10:FF:000066">
    <property type="entry name" value="Aspartate aminotransferase"/>
    <property type="match status" value="1"/>
</dbReference>
<dbReference type="FunFam" id="3.90.1150.10:FF:000001">
    <property type="entry name" value="Aspartate aminotransferase"/>
    <property type="match status" value="1"/>
</dbReference>
<dbReference type="Gene3D" id="3.90.1150.10">
    <property type="entry name" value="Aspartate Aminotransferase, domain 1"/>
    <property type="match status" value="1"/>
</dbReference>
<dbReference type="Gene3D" id="3.40.640.10">
    <property type="entry name" value="Type I PLP-dependent aspartate aminotransferase-like (Major domain)"/>
    <property type="match status" value="1"/>
</dbReference>
<dbReference type="InterPro" id="IPR004839">
    <property type="entry name" value="Aminotransferase_I/II_large"/>
</dbReference>
<dbReference type="InterPro" id="IPR000796">
    <property type="entry name" value="Asp_trans"/>
</dbReference>
<dbReference type="InterPro" id="IPR004838">
    <property type="entry name" value="NHTrfase_class1_PyrdxlP-BS"/>
</dbReference>
<dbReference type="InterPro" id="IPR015424">
    <property type="entry name" value="PyrdxlP-dep_Trfase"/>
</dbReference>
<dbReference type="InterPro" id="IPR015421">
    <property type="entry name" value="PyrdxlP-dep_Trfase_major"/>
</dbReference>
<dbReference type="InterPro" id="IPR015422">
    <property type="entry name" value="PyrdxlP-dep_Trfase_small"/>
</dbReference>
<dbReference type="NCBIfam" id="NF006719">
    <property type="entry name" value="PRK09257.1"/>
    <property type="match status" value="1"/>
</dbReference>
<dbReference type="PANTHER" id="PTHR11879">
    <property type="entry name" value="ASPARTATE AMINOTRANSFERASE"/>
    <property type="match status" value="1"/>
</dbReference>
<dbReference type="PANTHER" id="PTHR11879:SF22">
    <property type="entry name" value="ASPARTATE AMINOTRANSFERASE, MITOCHONDRIAL"/>
    <property type="match status" value="1"/>
</dbReference>
<dbReference type="Pfam" id="PF00155">
    <property type="entry name" value="Aminotran_1_2"/>
    <property type="match status" value="1"/>
</dbReference>
<dbReference type="PRINTS" id="PR00799">
    <property type="entry name" value="TRANSAMINASE"/>
</dbReference>
<dbReference type="SUPFAM" id="SSF53383">
    <property type="entry name" value="PLP-dependent transferases"/>
    <property type="match status" value="1"/>
</dbReference>
<dbReference type="PROSITE" id="PS00105">
    <property type="entry name" value="AA_TRANSFER_CLASS_1"/>
    <property type="match status" value="1"/>
</dbReference>
<proteinExistence type="inferred from homology"/>
<protein>
    <recommendedName>
        <fullName>Aspartate aminotransferase, mitochondrial</fullName>
        <ecNumber>2.6.1.1</ecNumber>
    </recommendedName>
    <alternativeName>
        <fullName>Transaminase A</fullName>
    </alternativeName>
</protein>
<organism>
    <name type="scientific">Schizosaccharomyces pombe (strain 972 / ATCC 24843)</name>
    <name type="common">Fission yeast</name>
    <dbReference type="NCBI Taxonomy" id="284812"/>
    <lineage>
        <taxon>Eukaryota</taxon>
        <taxon>Fungi</taxon>
        <taxon>Dikarya</taxon>
        <taxon>Ascomycota</taxon>
        <taxon>Taphrinomycotina</taxon>
        <taxon>Schizosaccharomycetes</taxon>
        <taxon>Schizosaccharomycetales</taxon>
        <taxon>Schizosaccharomycetaceae</taxon>
        <taxon>Schizosaccharomyces</taxon>
    </lineage>
</organism>
<keyword id="KW-0032">Aminotransferase</keyword>
<keyword id="KW-0496">Mitochondrion</keyword>
<keyword id="KW-0663">Pyridoxal phosphate</keyword>
<keyword id="KW-1185">Reference proteome</keyword>
<keyword id="KW-0808">Transferase</keyword>
<keyword id="KW-0809">Transit peptide</keyword>
<evidence type="ECO:0000250" key="1"/>
<evidence type="ECO:0000250" key="2">
    <source>
        <dbReference type="UniProtKB" id="Q01802"/>
    </source>
</evidence>
<evidence type="ECO:0000255" key="3"/>
<evidence type="ECO:0000269" key="4">
    <source>
    </source>
</evidence>
<evidence type="ECO:0000305" key="5"/>
<evidence type="ECO:0000312" key="6">
    <source>
        <dbReference type="EMBL" id="CAA22173.1"/>
    </source>
</evidence>
<comment type="function">
    <text evidence="1">Plays a key role in amino acid metabolism. Important for metabolite exchange between mitochondria and cytosol (By similarity).</text>
</comment>
<comment type="catalytic activity">
    <reaction evidence="2">
        <text>L-aspartate + 2-oxoglutarate = oxaloacetate + L-glutamate</text>
        <dbReference type="Rhea" id="RHEA:21824"/>
        <dbReference type="ChEBI" id="CHEBI:16452"/>
        <dbReference type="ChEBI" id="CHEBI:16810"/>
        <dbReference type="ChEBI" id="CHEBI:29985"/>
        <dbReference type="ChEBI" id="CHEBI:29991"/>
        <dbReference type="EC" id="2.6.1.1"/>
    </reaction>
</comment>
<comment type="cofactor">
    <cofactor evidence="2">
        <name>pyridoxal 5'-phosphate</name>
        <dbReference type="ChEBI" id="CHEBI:597326"/>
    </cofactor>
</comment>
<comment type="subunit">
    <text evidence="2">Homodimer.</text>
</comment>
<comment type="subcellular location">
    <subcellularLocation>
        <location evidence="4">Mitochondrion matrix</location>
    </subcellularLocation>
</comment>
<comment type="miscellaneous">
    <text evidence="5">In eukaryotes there are cytoplasmic, mitochondrial and chloroplastic isozymes.</text>
</comment>
<comment type="similarity">
    <text evidence="3">Belongs to the class-I pyridoxal-phosphate-dependent aminotransferase family.</text>
</comment>
<name>AATM_SCHPO</name>
<reference evidence="6" key="1">
    <citation type="journal article" date="2002" name="Nature">
        <title>The genome sequence of Schizosaccharomyces pombe.</title>
        <authorList>
            <person name="Wood V."/>
            <person name="Gwilliam R."/>
            <person name="Rajandream M.A."/>
            <person name="Lyne M.H."/>
            <person name="Lyne R."/>
            <person name="Stewart A."/>
            <person name="Sgouros J.G."/>
            <person name="Peat N."/>
            <person name="Hayles J."/>
            <person name="Baker S.G."/>
            <person name="Basham D."/>
            <person name="Bowman S."/>
            <person name="Brooks K."/>
            <person name="Brown D."/>
            <person name="Brown S."/>
            <person name="Chillingworth T."/>
            <person name="Churcher C.M."/>
            <person name="Collins M."/>
            <person name="Connor R."/>
            <person name="Cronin A."/>
            <person name="Davis P."/>
            <person name="Feltwell T."/>
            <person name="Fraser A."/>
            <person name="Gentles S."/>
            <person name="Goble A."/>
            <person name="Hamlin N."/>
            <person name="Harris D.E."/>
            <person name="Hidalgo J."/>
            <person name="Hodgson G."/>
            <person name="Holroyd S."/>
            <person name="Hornsby T."/>
            <person name="Howarth S."/>
            <person name="Huckle E.J."/>
            <person name="Hunt S."/>
            <person name="Jagels K."/>
            <person name="James K.D."/>
            <person name="Jones L."/>
            <person name="Jones M."/>
            <person name="Leather S."/>
            <person name="McDonald S."/>
            <person name="McLean J."/>
            <person name="Mooney P."/>
            <person name="Moule S."/>
            <person name="Mungall K.L."/>
            <person name="Murphy L.D."/>
            <person name="Niblett D."/>
            <person name="Odell C."/>
            <person name="Oliver K."/>
            <person name="O'Neil S."/>
            <person name="Pearson D."/>
            <person name="Quail M.A."/>
            <person name="Rabbinowitsch E."/>
            <person name="Rutherford K.M."/>
            <person name="Rutter S."/>
            <person name="Saunders D."/>
            <person name="Seeger K."/>
            <person name="Sharp S."/>
            <person name="Skelton J."/>
            <person name="Simmonds M.N."/>
            <person name="Squares R."/>
            <person name="Squares S."/>
            <person name="Stevens K."/>
            <person name="Taylor K."/>
            <person name="Taylor R.G."/>
            <person name="Tivey A."/>
            <person name="Walsh S.V."/>
            <person name="Warren T."/>
            <person name="Whitehead S."/>
            <person name="Woodward J.R."/>
            <person name="Volckaert G."/>
            <person name="Aert R."/>
            <person name="Robben J."/>
            <person name="Grymonprez B."/>
            <person name="Weltjens I."/>
            <person name="Vanstreels E."/>
            <person name="Rieger M."/>
            <person name="Schaefer M."/>
            <person name="Mueller-Auer S."/>
            <person name="Gabel C."/>
            <person name="Fuchs M."/>
            <person name="Duesterhoeft A."/>
            <person name="Fritzc C."/>
            <person name="Holzer E."/>
            <person name="Moestl D."/>
            <person name="Hilbert H."/>
            <person name="Borzym K."/>
            <person name="Langer I."/>
            <person name="Beck A."/>
            <person name="Lehrach H."/>
            <person name="Reinhardt R."/>
            <person name="Pohl T.M."/>
            <person name="Eger P."/>
            <person name="Zimmermann W."/>
            <person name="Wedler H."/>
            <person name="Wambutt R."/>
            <person name="Purnelle B."/>
            <person name="Goffeau A."/>
            <person name="Cadieu E."/>
            <person name="Dreano S."/>
            <person name="Gloux S."/>
            <person name="Lelaure V."/>
            <person name="Mottier S."/>
            <person name="Galibert F."/>
            <person name="Aves S.J."/>
            <person name="Xiang Z."/>
            <person name="Hunt C."/>
            <person name="Moore K."/>
            <person name="Hurst S.M."/>
            <person name="Lucas M."/>
            <person name="Rochet M."/>
            <person name="Gaillardin C."/>
            <person name="Tallada V.A."/>
            <person name="Garzon A."/>
            <person name="Thode G."/>
            <person name="Daga R.R."/>
            <person name="Cruzado L."/>
            <person name="Jimenez J."/>
            <person name="Sanchez M."/>
            <person name="del Rey F."/>
            <person name="Benito J."/>
            <person name="Dominguez A."/>
            <person name="Revuelta J.L."/>
            <person name="Moreno S."/>
            <person name="Armstrong J."/>
            <person name="Forsburg S.L."/>
            <person name="Cerutti L."/>
            <person name="Lowe T."/>
            <person name="McCombie W.R."/>
            <person name="Paulsen I."/>
            <person name="Potashkin J."/>
            <person name="Shpakovski G.V."/>
            <person name="Ussery D."/>
            <person name="Barrell B.G."/>
            <person name="Nurse P."/>
        </authorList>
    </citation>
    <scope>NUCLEOTIDE SEQUENCE [LARGE SCALE GENOMIC DNA]</scope>
    <source>
        <strain>972 / ATCC 24843</strain>
    </source>
</reference>
<reference evidence="5" key="2">
    <citation type="journal article" date="2006" name="Nat. Biotechnol.">
        <title>ORFeome cloning and global analysis of protein localization in the fission yeast Schizosaccharomyces pombe.</title>
        <authorList>
            <person name="Matsuyama A."/>
            <person name="Arai R."/>
            <person name="Yashiroda Y."/>
            <person name="Shirai A."/>
            <person name="Kamata A."/>
            <person name="Sekido S."/>
            <person name="Kobayashi Y."/>
            <person name="Hashimoto A."/>
            <person name="Hamamoto M."/>
            <person name="Hiraoka Y."/>
            <person name="Horinouchi S."/>
            <person name="Yoshida M."/>
        </authorList>
    </citation>
    <scope>SUBCELLULAR LOCATION [LARGE SCALE ANALYSIS]</scope>
</reference>
<feature type="transit peptide" description="Mitochondrion" evidence="2 5">
    <location>
        <begin position="1"/>
        <end status="unknown"/>
    </location>
</feature>
<feature type="chain" id="PRO_0000309452" description="Aspartate aminotransferase, mitochondrial">
    <location>
        <begin status="unknown"/>
        <end position="437"/>
    </location>
</feature>
<feature type="binding site" evidence="1">
    <location>
        <position position="72"/>
    </location>
    <ligand>
        <name>L-aspartate</name>
        <dbReference type="ChEBI" id="CHEBI:29991"/>
    </ligand>
</feature>
<feature type="binding site" evidence="1">
    <location>
        <position position="167"/>
    </location>
    <ligand>
        <name>L-aspartate</name>
        <dbReference type="ChEBI" id="CHEBI:29991"/>
    </ligand>
</feature>
<feature type="binding site" evidence="1">
    <location>
        <position position="220"/>
    </location>
    <ligand>
        <name>L-aspartate</name>
        <dbReference type="ChEBI" id="CHEBI:29991"/>
    </ligand>
</feature>
<feature type="binding site" evidence="1">
    <location>
        <position position="413"/>
    </location>
    <ligand>
        <name>L-aspartate</name>
        <dbReference type="ChEBI" id="CHEBI:29991"/>
    </ligand>
</feature>
<feature type="modified residue" description="N6-(pyridoxal phosphate)lysine" evidence="1">
    <location>
        <position position="284"/>
    </location>
</feature>
<sequence>MLARNLRCLHPNTFASLKTNVSYHGVKCLASQSKRGFKVWADVPMGPPDPIFGITEAYKKDGDVKKMNLGAGTYRDDAGKPYVLPSVRQAETELLSQKLDKEYAPITGIPSFRVQATKLAYGDVYESIKDRLVSAQSISGTGALCIAANFLASFYPSKTIYVSDPTWGNHKNVFSRAGLTVKSYKYYDPATRGLDIKGMLSDLTSAPDGSIILLHACAHNPTGVDPTKAQWDDILKTMQKKNHFALLDMAYQGFASGDFARDAYATRLFASSNVPMLLCQSFAKNMGLYGERAGCFSILANDAEEAARIESQTKILIRALYSNPPVNGARIANHILSNPALREQWAGEVVGMSERLKSMRKALRNILEKDLKNKHSWKHITDQIGMFCYTGLNPQQVDVLAKQYHIYLTKNGRISISGLNTSNVRYFAEAINAVTSN</sequence>
<gene>
    <name type="ORF">SPBC725.01</name>
</gene>